<sequence length="88" mass="9812">MKTVLIALLRFYKVAVSPMLGNRCRFYPSCSDYAREAIQYHGAARGTYLAVRRVCRCHPFSAGGVDLVPPPNSDTRARGEADARSHRL</sequence>
<protein>
    <recommendedName>
        <fullName evidence="1">Putative membrane protein insertion efficiency factor</fullName>
    </recommendedName>
</protein>
<feature type="chain" id="PRO_1000122621" description="Putative membrane protein insertion efficiency factor">
    <location>
        <begin position="1"/>
        <end position="88"/>
    </location>
</feature>
<feature type="region of interest" description="Disordered" evidence="2">
    <location>
        <begin position="68"/>
        <end position="88"/>
    </location>
</feature>
<feature type="compositionally biased region" description="Basic and acidic residues" evidence="2">
    <location>
        <begin position="75"/>
        <end position="88"/>
    </location>
</feature>
<gene>
    <name type="ordered locus">Bcenmc03_3182</name>
</gene>
<accession>B1K0Y5</accession>
<keyword id="KW-0997">Cell inner membrane</keyword>
<keyword id="KW-1003">Cell membrane</keyword>
<keyword id="KW-0472">Membrane</keyword>
<reference key="1">
    <citation type="submission" date="2008-02" db="EMBL/GenBank/DDBJ databases">
        <title>Complete sequence of chromosome 1 of Burkholderia cenocepacia MC0-3.</title>
        <authorList>
            <person name="Copeland A."/>
            <person name="Lucas S."/>
            <person name="Lapidus A."/>
            <person name="Barry K."/>
            <person name="Bruce D."/>
            <person name="Goodwin L."/>
            <person name="Glavina del Rio T."/>
            <person name="Dalin E."/>
            <person name="Tice H."/>
            <person name="Pitluck S."/>
            <person name="Chain P."/>
            <person name="Malfatti S."/>
            <person name="Shin M."/>
            <person name="Vergez L."/>
            <person name="Schmutz J."/>
            <person name="Larimer F."/>
            <person name="Land M."/>
            <person name="Hauser L."/>
            <person name="Kyrpides N."/>
            <person name="Mikhailova N."/>
            <person name="Tiedje J."/>
            <person name="Richardson P."/>
        </authorList>
    </citation>
    <scope>NUCLEOTIDE SEQUENCE [LARGE SCALE GENOMIC DNA]</scope>
    <source>
        <strain>MC0-3</strain>
    </source>
</reference>
<proteinExistence type="inferred from homology"/>
<organism>
    <name type="scientific">Burkholderia orbicola (strain MC0-3)</name>
    <dbReference type="NCBI Taxonomy" id="406425"/>
    <lineage>
        <taxon>Bacteria</taxon>
        <taxon>Pseudomonadati</taxon>
        <taxon>Pseudomonadota</taxon>
        <taxon>Betaproteobacteria</taxon>
        <taxon>Burkholderiales</taxon>
        <taxon>Burkholderiaceae</taxon>
        <taxon>Burkholderia</taxon>
        <taxon>Burkholderia cepacia complex</taxon>
        <taxon>Burkholderia orbicola</taxon>
    </lineage>
</organism>
<comment type="function">
    <text evidence="1">Could be involved in insertion of integral membrane proteins into the membrane.</text>
</comment>
<comment type="subcellular location">
    <subcellularLocation>
        <location evidence="1">Cell inner membrane</location>
        <topology evidence="1">Peripheral membrane protein</topology>
        <orientation evidence="1">Cytoplasmic side</orientation>
    </subcellularLocation>
</comment>
<comment type="similarity">
    <text evidence="1">Belongs to the UPF0161 family.</text>
</comment>
<evidence type="ECO:0000255" key="1">
    <source>
        <dbReference type="HAMAP-Rule" id="MF_00386"/>
    </source>
</evidence>
<evidence type="ECO:0000256" key="2">
    <source>
        <dbReference type="SAM" id="MobiDB-lite"/>
    </source>
</evidence>
<name>YIDD_BURO0</name>
<dbReference type="EMBL" id="CP000958">
    <property type="protein sequence ID" value="ACA92339.1"/>
    <property type="molecule type" value="Genomic_DNA"/>
</dbReference>
<dbReference type="GeneID" id="83049964"/>
<dbReference type="KEGG" id="bcm:Bcenmc03_3182"/>
<dbReference type="HOGENOM" id="CLU_144811_2_2_4"/>
<dbReference type="Proteomes" id="UP000002169">
    <property type="component" value="Chromosome 1"/>
</dbReference>
<dbReference type="GO" id="GO:0005886">
    <property type="term" value="C:plasma membrane"/>
    <property type="evidence" value="ECO:0007669"/>
    <property type="project" value="UniProtKB-SubCell"/>
</dbReference>
<dbReference type="HAMAP" id="MF_00386">
    <property type="entry name" value="UPF0161_YidD"/>
    <property type="match status" value="1"/>
</dbReference>
<dbReference type="InterPro" id="IPR002696">
    <property type="entry name" value="Membr_insert_effic_factor_YidD"/>
</dbReference>
<dbReference type="NCBIfam" id="TIGR00278">
    <property type="entry name" value="membrane protein insertion efficiency factor YidD"/>
    <property type="match status" value="1"/>
</dbReference>
<dbReference type="PANTHER" id="PTHR33383">
    <property type="entry name" value="MEMBRANE PROTEIN INSERTION EFFICIENCY FACTOR-RELATED"/>
    <property type="match status" value="1"/>
</dbReference>
<dbReference type="PANTHER" id="PTHR33383:SF1">
    <property type="entry name" value="MEMBRANE PROTEIN INSERTION EFFICIENCY FACTOR-RELATED"/>
    <property type="match status" value="1"/>
</dbReference>
<dbReference type="Pfam" id="PF01809">
    <property type="entry name" value="YidD"/>
    <property type="match status" value="1"/>
</dbReference>
<dbReference type="SMART" id="SM01234">
    <property type="entry name" value="Haemolytic"/>
    <property type="match status" value="1"/>
</dbReference>